<reference key="1">
    <citation type="online journal article" date="1996" name="Plant Gene Register">
        <title>Isolation of a genomic DNA clone from Gossypium hirsutum with high similarity to class I endochitinase plant sequences.</title>
        <authorList>
            <person name="Levorson J.P."/>
            <person name="Chlan C.A."/>
        </authorList>
        <locator>PGR96-054</locator>
    </citation>
    <scope>NUCLEOTIDE SEQUENCE [GENOMIC DNA]</scope>
    <source>
        <strain>cv. Coker 201</strain>
    </source>
</reference>
<feature type="signal peptide" evidence="1">
    <location>
        <begin position="1"/>
        <end position="22"/>
    </location>
</feature>
<feature type="chain" id="PRO_0000005292" description="Endochitinase 1">
    <location>
        <begin position="23"/>
        <end position="317"/>
    </location>
</feature>
<feature type="propeptide" id="PRO_0000005293" description="Removed in mature form" evidence="1">
    <location>
        <begin position="318"/>
        <end position="324"/>
    </location>
</feature>
<feature type="domain" description="Chitin-binding type-1" evidence="3">
    <location>
        <begin position="23"/>
        <end position="64"/>
    </location>
</feature>
<feature type="active site" description="Proton donor" evidence="2">
    <location>
        <position position="139"/>
    </location>
</feature>
<feature type="disulfide bond" evidence="3">
    <location>
        <begin position="25"/>
        <end position="40"/>
    </location>
</feature>
<feature type="disulfide bond" evidence="3">
    <location>
        <begin position="34"/>
        <end position="46"/>
    </location>
</feature>
<feature type="disulfide bond" evidence="3">
    <location>
        <begin position="39"/>
        <end position="53"/>
    </location>
</feature>
<feature type="disulfide bond" evidence="3">
    <location>
        <begin position="58"/>
        <end position="62"/>
    </location>
</feature>
<feature type="disulfide bond" evidence="3">
    <location>
        <begin position="95"/>
        <end position="158"/>
    </location>
</feature>
<feature type="disulfide bond" evidence="3">
    <location>
        <begin position="170"/>
        <end position="178"/>
    </location>
</feature>
<feature type="disulfide bond" evidence="3">
    <location>
        <begin position="277"/>
        <end position="309"/>
    </location>
</feature>
<dbReference type="EC" id="3.2.1.14"/>
<dbReference type="EMBL" id="U60197">
    <property type="protein sequence ID" value="AAB67842.1"/>
    <property type="molecule type" value="Genomic_DNA"/>
</dbReference>
<dbReference type="PIR" id="T10802">
    <property type="entry name" value="T10802"/>
</dbReference>
<dbReference type="RefSeq" id="XP_016703545.1">
    <property type="nucleotide sequence ID" value="XM_016848056.2"/>
</dbReference>
<dbReference type="SMR" id="Q39799"/>
<dbReference type="STRING" id="3635.Q39799"/>
<dbReference type="CAZy" id="CBM18">
    <property type="family name" value="Carbohydrate-Binding Module Family 18"/>
</dbReference>
<dbReference type="CAZy" id="GH19">
    <property type="family name" value="Glycoside Hydrolase Family 19"/>
</dbReference>
<dbReference type="PaxDb" id="3635-Q39799"/>
<dbReference type="GeneID" id="107918485"/>
<dbReference type="KEGG" id="ghi:107918485"/>
<dbReference type="OrthoDB" id="63857at41938"/>
<dbReference type="Proteomes" id="UP000189702">
    <property type="component" value="Chromosome 24"/>
</dbReference>
<dbReference type="GO" id="GO:0008061">
    <property type="term" value="F:chitin binding"/>
    <property type="evidence" value="ECO:0007669"/>
    <property type="project" value="UniProtKB-KW"/>
</dbReference>
<dbReference type="GO" id="GO:0004568">
    <property type="term" value="F:chitinase activity"/>
    <property type="evidence" value="ECO:0000318"/>
    <property type="project" value="GO_Central"/>
</dbReference>
<dbReference type="GO" id="GO:0008843">
    <property type="term" value="F:endochitinase activity"/>
    <property type="evidence" value="ECO:0007669"/>
    <property type="project" value="UniProtKB-EC"/>
</dbReference>
<dbReference type="GO" id="GO:0016998">
    <property type="term" value="P:cell wall macromolecule catabolic process"/>
    <property type="evidence" value="ECO:0007669"/>
    <property type="project" value="InterPro"/>
</dbReference>
<dbReference type="GO" id="GO:0006032">
    <property type="term" value="P:chitin catabolic process"/>
    <property type="evidence" value="ECO:0007669"/>
    <property type="project" value="UniProtKB-KW"/>
</dbReference>
<dbReference type="GO" id="GO:0050832">
    <property type="term" value="P:defense response to fungus"/>
    <property type="evidence" value="ECO:0000318"/>
    <property type="project" value="GO_Central"/>
</dbReference>
<dbReference type="GO" id="GO:0000272">
    <property type="term" value="P:polysaccharide catabolic process"/>
    <property type="evidence" value="ECO:0007669"/>
    <property type="project" value="UniProtKB-KW"/>
</dbReference>
<dbReference type="CDD" id="cd00325">
    <property type="entry name" value="chitinase_GH19"/>
    <property type="match status" value="1"/>
</dbReference>
<dbReference type="CDD" id="cd06921">
    <property type="entry name" value="ChtBD1_GH19_hevein"/>
    <property type="match status" value="1"/>
</dbReference>
<dbReference type="FunFam" id="3.30.60.10:FF:000001">
    <property type="entry name" value="Basic endochitinase"/>
    <property type="match status" value="1"/>
</dbReference>
<dbReference type="FunFam" id="3.30.20.10:FF:000001">
    <property type="entry name" value="Endochitinase (Chitinase)"/>
    <property type="match status" value="1"/>
</dbReference>
<dbReference type="Gene3D" id="1.10.530.10">
    <property type="match status" value="1"/>
</dbReference>
<dbReference type="Gene3D" id="3.30.20.10">
    <property type="entry name" value="Endochitinase, domain 2"/>
    <property type="match status" value="1"/>
</dbReference>
<dbReference type="Gene3D" id="3.30.60.10">
    <property type="entry name" value="Endochitinase-like"/>
    <property type="match status" value="1"/>
</dbReference>
<dbReference type="InterPro" id="IPR001002">
    <property type="entry name" value="Chitin-bd_1"/>
</dbReference>
<dbReference type="InterPro" id="IPR018371">
    <property type="entry name" value="Chitin-binding_1_CS"/>
</dbReference>
<dbReference type="InterPro" id="IPR036861">
    <property type="entry name" value="Endochitinase-like_sf"/>
</dbReference>
<dbReference type="InterPro" id="IPR016283">
    <property type="entry name" value="Glyco_hydro_19"/>
</dbReference>
<dbReference type="InterPro" id="IPR000726">
    <property type="entry name" value="Glyco_hydro_19_cat"/>
</dbReference>
<dbReference type="InterPro" id="IPR023346">
    <property type="entry name" value="Lysozyme-like_dom_sf"/>
</dbReference>
<dbReference type="PANTHER" id="PTHR22595">
    <property type="entry name" value="CHITINASE-RELATED"/>
    <property type="match status" value="1"/>
</dbReference>
<dbReference type="PANTHER" id="PTHR22595:SF200">
    <property type="entry name" value="ENDOCHITINASE 1"/>
    <property type="match status" value="1"/>
</dbReference>
<dbReference type="Pfam" id="PF00187">
    <property type="entry name" value="Chitin_bind_1"/>
    <property type="match status" value="1"/>
</dbReference>
<dbReference type="Pfam" id="PF00182">
    <property type="entry name" value="Glyco_hydro_19"/>
    <property type="match status" value="1"/>
</dbReference>
<dbReference type="PIRSF" id="PIRSF001060">
    <property type="entry name" value="Endochitinase"/>
    <property type="match status" value="1"/>
</dbReference>
<dbReference type="PRINTS" id="PR00451">
    <property type="entry name" value="CHITINBINDNG"/>
</dbReference>
<dbReference type="SMART" id="SM00270">
    <property type="entry name" value="ChtBD1"/>
    <property type="match status" value="1"/>
</dbReference>
<dbReference type="SUPFAM" id="SSF53955">
    <property type="entry name" value="Lysozyme-like"/>
    <property type="match status" value="1"/>
</dbReference>
<dbReference type="SUPFAM" id="SSF57016">
    <property type="entry name" value="Plant lectins/antimicrobial peptides"/>
    <property type="match status" value="1"/>
</dbReference>
<dbReference type="PROSITE" id="PS00026">
    <property type="entry name" value="CHIT_BIND_I_1"/>
    <property type="match status" value="1"/>
</dbReference>
<dbReference type="PROSITE" id="PS50941">
    <property type="entry name" value="CHIT_BIND_I_2"/>
    <property type="match status" value="1"/>
</dbReference>
<dbReference type="PROSITE" id="PS00773">
    <property type="entry name" value="CHITINASE_19_1"/>
    <property type="match status" value="1"/>
</dbReference>
<dbReference type="PROSITE" id="PS00774">
    <property type="entry name" value="CHITINASE_19_2"/>
    <property type="match status" value="1"/>
</dbReference>
<name>CHI1_GOSHI</name>
<accession>Q39799</accession>
<organism>
    <name type="scientific">Gossypium hirsutum</name>
    <name type="common">Upland cotton</name>
    <name type="synonym">Gossypium mexicanum</name>
    <dbReference type="NCBI Taxonomy" id="3635"/>
    <lineage>
        <taxon>Eukaryota</taxon>
        <taxon>Viridiplantae</taxon>
        <taxon>Streptophyta</taxon>
        <taxon>Embryophyta</taxon>
        <taxon>Tracheophyta</taxon>
        <taxon>Spermatophyta</taxon>
        <taxon>Magnoliopsida</taxon>
        <taxon>eudicotyledons</taxon>
        <taxon>Gunneridae</taxon>
        <taxon>Pentapetalae</taxon>
        <taxon>rosids</taxon>
        <taxon>malvids</taxon>
        <taxon>Malvales</taxon>
        <taxon>Malvaceae</taxon>
        <taxon>Malvoideae</taxon>
        <taxon>Gossypium</taxon>
    </lineage>
</organism>
<comment type="function">
    <text>Defense against chitin-containing fungal pathogens.</text>
</comment>
<comment type="catalytic activity">
    <reaction>
        <text>Random endo-hydrolysis of N-acetyl-beta-D-glucosaminide (1-&gt;4)-beta-linkages in chitin and chitodextrins.</text>
        <dbReference type="EC" id="3.2.1.14"/>
    </reaction>
</comment>
<comment type="similarity">
    <text evidence="4">Belongs to the glycosyl hydrolase 19 family. Chitinase class I subfamily.</text>
</comment>
<sequence>MSFLQALSIFLLLLLYVVVGSAEQCGRQAGGALCPGGLCCSQFGWCGSTADYCTVPGCQSQCSGSGPAPGPGGLTNLISRETFNQMLLHRNDGACPARGFYTYDAFIAAARSFPAFATTGDQATRKREIAAFLAQTSHETTGGAGWAAPDGPYAWGYCYNRELNPPSSYCASDPNYPCAPGKQYFGRGPMQLSWNYNYGQCGRAIGVDLLNNPDLLSSDPTISFKSAFWFWMTPQSPKPSCHNVIIGAWSPSSSDRAAGRVPGYGVITNIINGGLECGKGWNAQVEDRIGFYKRYCDILGVSYGNNLDCYNQSPFGNGVSVDSM</sequence>
<evidence type="ECO:0000250" key="1"/>
<evidence type="ECO:0000250" key="2">
    <source>
        <dbReference type="UniProtKB" id="P29022"/>
    </source>
</evidence>
<evidence type="ECO:0000255" key="3">
    <source>
        <dbReference type="PROSITE-ProRule" id="PRU00261"/>
    </source>
</evidence>
<evidence type="ECO:0000305" key="4"/>
<proteinExistence type="inferred from homology"/>
<protein>
    <recommendedName>
        <fullName>Endochitinase 1</fullName>
        <ecNumber>3.2.1.14</ecNumber>
    </recommendedName>
</protein>
<keyword id="KW-0119">Carbohydrate metabolism</keyword>
<keyword id="KW-0146">Chitin degradation</keyword>
<keyword id="KW-0147">Chitin-binding</keyword>
<keyword id="KW-1015">Disulfide bond</keyword>
<keyword id="KW-0326">Glycosidase</keyword>
<keyword id="KW-0378">Hydrolase</keyword>
<keyword id="KW-0611">Plant defense</keyword>
<keyword id="KW-0624">Polysaccharide degradation</keyword>
<keyword id="KW-1185">Reference proteome</keyword>
<keyword id="KW-0732">Signal</keyword>